<sequence length="567" mass="62802">MSSSKRKRGAETAAEDCDDGTDKSNTGNSFFDIYGPEAKAELDFKSPETTLNLQDVQGLVTWVLAEGFMPSWVFIKNKPLIPKVVLLYLPGLDAALYLSHSKTLSSLKSCCGNPMALLALSCVVDEMRTIDTILTCKGRKKKTVTSSVEPPPLVSSPEACNLMGKSFVELTKDIPFPVSYYTLSQKEMEQNGYTFEKLELTPTLPAPSGSCPPEIVALDCEMCITKEGLELTRVTLVDIQGQVLLDKLVMPTNPITDYNTRYSGITAVMMEGVTTTLKDIQEEFLKLVFKETILVGHSLENDLLSLKISHNLVIDTAVLYKHPHGRSYKTKLRILAKKFLAREIQESESGHDSAEDAKAAMDLALLKIKHGPDFGSPPEVIRKKLLAVLNESGKTTSIIDNINIVKRYASESSNAIPVSSDDEALSKAVKEVKNKRSQFVWTQFSELNAHFQSRADDPQKLNSRLAEMISLLTCNKKSGLKKSNVSPETKEILKKMNERVQSLYAALPTNAMFIVCTGHGDTSIVHRVRKMLKDEDEIGFDREKLVKVLEELQAQAEVALCFVGIKQ</sequence>
<keyword id="KW-0025">Alternative splicing</keyword>
<keyword id="KW-0269">Exonuclease</keyword>
<keyword id="KW-0378">Hydrolase</keyword>
<keyword id="KW-0540">Nuclease</keyword>
<keyword id="KW-0539">Nucleus</keyword>
<keyword id="KW-1185">Reference proteome</keyword>
<organism>
    <name type="scientific">Arabidopsis thaliana</name>
    <name type="common">Mouse-ear cress</name>
    <dbReference type="NCBI Taxonomy" id="3702"/>
    <lineage>
        <taxon>Eukaryota</taxon>
        <taxon>Viridiplantae</taxon>
        <taxon>Streptophyta</taxon>
        <taxon>Embryophyta</taxon>
        <taxon>Tracheophyta</taxon>
        <taxon>Spermatophyta</taxon>
        <taxon>Magnoliopsida</taxon>
        <taxon>eudicotyledons</taxon>
        <taxon>Gunneridae</taxon>
        <taxon>Pentapetalae</taxon>
        <taxon>rosids</taxon>
        <taxon>malvids</taxon>
        <taxon>Brassicales</taxon>
        <taxon>Brassicaceae</taxon>
        <taxon>Camelineae</taxon>
        <taxon>Arabidopsis</taxon>
    </lineage>
</organism>
<proteinExistence type="evidence at transcript level"/>
<protein>
    <recommendedName>
        <fullName>Small RNA degrading nuclease 5</fullName>
        <ecNumber>3.1.-.-</ecNumber>
    </recommendedName>
</protein>
<accession>Q8L7M4</accession>
<evidence type="ECO:0000256" key="1">
    <source>
        <dbReference type="SAM" id="MobiDB-lite"/>
    </source>
</evidence>
<evidence type="ECO:0000303" key="2">
    <source>
    </source>
</evidence>
<evidence type="ECO:0000305" key="3"/>
<reference key="1">
    <citation type="journal article" date="2000" name="Nature">
        <title>Sequence and analysis of chromosome 5 of the plant Arabidopsis thaliana.</title>
        <authorList>
            <person name="Tabata S."/>
            <person name="Kaneko T."/>
            <person name="Nakamura Y."/>
            <person name="Kotani H."/>
            <person name="Kato T."/>
            <person name="Asamizu E."/>
            <person name="Miyajima N."/>
            <person name="Sasamoto S."/>
            <person name="Kimura T."/>
            <person name="Hosouchi T."/>
            <person name="Kawashima K."/>
            <person name="Kohara M."/>
            <person name="Matsumoto M."/>
            <person name="Matsuno A."/>
            <person name="Muraki A."/>
            <person name="Nakayama S."/>
            <person name="Nakazaki N."/>
            <person name="Naruo K."/>
            <person name="Okumura S."/>
            <person name="Shinpo S."/>
            <person name="Takeuchi C."/>
            <person name="Wada T."/>
            <person name="Watanabe A."/>
            <person name="Yamada M."/>
            <person name="Yasuda M."/>
            <person name="Sato S."/>
            <person name="de la Bastide M."/>
            <person name="Huang E."/>
            <person name="Spiegel L."/>
            <person name="Gnoj L."/>
            <person name="O'Shaughnessy A."/>
            <person name="Preston R."/>
            <person name="Habermann K."/>
            <person name="Murray J."/>
            <person name="Johnson D."/>
            <person name="Rohlfing T."/>
            <person name="Nelson J."/>
            <person name="Stoneking T."/>
            <person name="Pepin K."/>
            <person name="Spieth J."/>
            <person name="Sekhon M."/>
            <person name="Armstrong J."/>
            <person name="Becker M."/>
            <person name="Belter E."/>
            <person name="Cordum H."/>
            <person name="Cordes M."/>
            <person name="Courtney L."/>
            <person name="Courtney W."/>
            <person name="Dante M."/>
            <person name="Du H."/>
            <person name="Edwards J."/>
            <person name="Fryman J."/>
            <person name="Haakensen B."/>
            <person name="Lamar E."/>
            <person name="Latreille P."/>
            <person name="Leonard S."/>
            <person name="Meyer R."/>
            <person name="Mulvaney E."/>
            <person name="Ozersky P."/>
            <person name="Riley A."/>
            <person name="Strowmatt C."/>
            <person name="Wagner-McPherson C."/>
            <person name="Wollam A."/>
            <person name="Yoakum M."/>
            <person name="Bell M."/>
            <person name="Dedhia N."/>
            <person name="Parnell L."/>
            <person name="Shah R."/>
            <person name="Rodriguez M."/>
            <person name="Hoon See L."/>
            <person name="Vil D."/>
            <person name="Baker J."/>
            <person name="Kirchoff K."/>
            <person name="Toth K."/>
            <person name="King L."/>
            <person name="Bahret A."/>
            <person name="Miller B."/>
            <person name="Marra M.A."/>
            <person name="Martienssen R."/>
            <person name="McCombie W.R."/>
            <person name="Wilson R.K."/>
            <person name="Murphy G."/>
            <person name="Bancroft I."/>
            <person name="Volckaert G."/>
            <person name="Wambutt R."/>
            <person name="Duesterhoeft A."/>
            <person name="Stiekema W."/>
            <person name="Pohl T."/>
            <person name="Entian K.-D."/>
            <person name="Terryn N."/>
            <person name="Hartley N."/>
            <person name="Bent E."/>
            <person name="Johnson S."/>
            <person name="Langham S.-A."/>
            <person name="McCullagh B."/>
            <person name="Robben J."/>
            <person name="Grymonprez B."/>
            <person name="Zimmermann W."/>
            <person name="Ramsperger U."/>
            <person name="Wedler H."/>
            <person name="Balke K."/>
            <person name="Wedler E."/>
            <person name="Peters S."/>
            <person name="van Staveren M."/>
            <person name="Dirkse W."/>
            <person name="Mooijman P."/>
            <person name="Klein Lankhorst R."/>
            <person name="Weitzenegger T."/>
            <person name="Bothe G."/>
            <person name="Rose M."/>
            <person name="Hauf J."/>
            <person name="Berneiser S."/>
            <person name="Hempel S."/>
            <person name="Feldpausch M."/>
            <person name="Lamberth S."/>
            <person name="Villarroel R."/>
            <person name="Gielen J."/>
            <person name="Ardiles W."/>
            <person name="Bents O."/>
            <person name="Lemcke K."/>
            <person name="Kolesov G."/>
            <person name="Mayer K.F.X."/>
            <person name="Rudd S."/>
            <person name="Schoof H."/>
            <person name="Schueller C."/>
            <person name="Zaccaria P."/>
            <person name="Mewes H.-W."/>
            <person name="Bevan M."/>
            <person name="Fransz P.F."/>
        </authorList>
    </citation>
    <scope>NUCLEOTIDE SEQUENCE [LARGE SCALE GENOMIC DNA]</scope>
    <source>
        <strain>cv. Columbia</strain>
    </source>
</reference>
<reference key="2">
    <citation type="journal article" date="2017" name="Plant J.">
        <title>Araport11: a complete reannotation of the Arabidopsis thaliana reference genome.</title>
        <authorList>
            <person name="Cheng C.Y."/>
            <person name="Krishnakumar V."/>
            <person name="Chan A.P."/>
            <person name="Thibaud-Nissen F."/>
            <person name="Schobel S."/>
            <person name="Town C.D."/>
        </authorList>
    </citation>
    <scope>GENOME REANNOTATION</scope>
    <source>
        <strain>cv. Columbia</strain>
    </source>
</reference>
<reference key="3">
    <citation type="journal article" date="2003" name="Science">
        <title>Empirical analysis of transcriptional activity in the Arabidopsis genome.</title>
        <authorList>
            <person name="Yamada K."/>
            <person name="Lim J."/>
            <person name="Dale J.M."/>
            <person name="Chen H."/>
            <person name="Shinn P."/>
            <person name="Palm C.J."/>
            <person name="Southwick A.M."/>
            <person name="Wu H.C."/>
            <person name="Kim C.J."/>
            <person name="Nguyen M."/>
            <person name="Pham P.K."/>
            <person name="Cheuk R.F."/>
            <person name="Karlin-Newmann G."/>
            <person name="Liu S.X."/>
            <person name="Lam B."/>
            <person name="Sakano H."/>
            <person name="Wu T."/>
            <person name="Yu G."/>
            <person name="Miranda M."/>
            <person name="Quach H.L."/>
            <person name="Tripp M."/>
            <person name="Chang C.H."/>
            <person name="Lee J.M."/>
            <person name="Toriumi M.J."/>
            <person name="Chan M.M."/>
            <person name="Tang C.C."/>
            <person name="Onodera C.S."/>
            <person name="Deng J.M."/>
            <person name="Akiyama K."/>
            <person name="Ansari Y."/>
            <person name="Arakawa T."/>
            <person name="Banh J."/>
            <person name="Banno F."/>
            <person name="Bowser L."/>
            <person name="Brooks S.Y."/>
            <person name="Carninci P."/>
            <person name="Chao Q."/>
            <person name="Choy N."/>
            <person name="Enju A."/>
            <person name="Goldsmith A.D."/>
            <person name="Gurjal M."/>
            <person name="Hansen N.F."/>
            <person name="Hayashizaki Y."/>
            <person name="Johnson-Hopson C."/>
            <person name="Hsuan V.W."/>
            <person name="Iida K."/>
            <person name="Karnes M."/>
            <person name="Khan S."/>
            <person name="Koesema E."/>
            <person name="Ishida J."/>
            <person name="Jiang P.X."/>
            <person name="Jones T."/>
            <person name="Kawai J."/>
            <person name="Kamiya A."/>
            <person name="Meyers C."/>
            <person name="Nakajima M."/>
            <person name="Narusaka M."/>
            <person name="Seki M."/>
            <person name="Sakurai T."/>
            <person name="Satou M."/>
            <person name="Tamse R."/>
            <person name="Vaysberg M."/>
            <person name="Wallender E.K."/>
            <person name="Wong C."/>
            <person name="Yamamura Y."/>
            <person name="Yuan S."/>
            <person name="Shinozaki K."/>
            <person name="Davis R.W."/>
            <person name="Theologis A."/>
            <person name="Ecker J.R."/>
        </authorList>
    </citation>
    <scope>NUCLEOTIDE SEQUENCE [LARGE SCALE MRNA] (ISOFORM 2)</scope>
    <source>
        <strain>cv. Columbia</strain>
    </source>
</reference>
<reference key="4">
    <citation type="journal article" date="2008" name="Science">
        <title>Degradation of microRNAs by a family of exoribonucleases in Arabidopsis.</title>
        <authorList>
            <person name="Ramachandran V."/>
            <person name="Chen X."/>
        </authorList>
    </citation>
    <scope>IDENTIFICATION</scope>
</reference>
<comment type="function">
    <text>Probable 3'-5' exonuclease degrading single-stranded small RNAs.</text>
</comment>
<comment type="subcellular location">
    <subcellularLocation>
        <location evidence="3">Nucleus</location>
    </subcellularLocation>
</comment>
<comment type="alternative products">
    <event type="alternative splicing"/>
    <isoform>
        <id>Q8L7M4-1</id>
        <name>1</name>
        <sequence type="displayed"/>
    </isoform>
    <isoform>
        <id>Q8L7M4-2</id>
        <name>2</name>
        <sequence type="described" ref="VSP_035856 VSP_035857"/>
    </isoform>
</comment>
<comment type="similarity">
    <text evidence="3">Belongs to the REXO1/REXO3 family.</text>
</comment>
<feature type="chain" id="PRO_0000355088" description="Small RNA degrading nuclease 5">
    <location>
        <begin position="1"/>
        <end position="567"/>
    </location>
</feature>
<feature type="domain" description="Exonuclease">
    <location>
        <begin position="215"/>
        <end position="364"/>
    </location>
</feature>
<feature type="region of interest" description="Disordered" evidence="1">
    <location>
        <begin position="1"/>
        <end position="24"/>
    </location>
</feature>
<feature type="splice variant" id="VSP_035856" description="In isoform 2." evidence="2">
    <original>EEFLKLVFKETILVGHS</original>
    <variation>YYTSIHMEDLIKLNFEF</variation>
    <location>
        <begin position="282"/>
        <end position="298"/>
    </location>
</feature>
<feature type="splice variant" id="VSP_035857" description="In isoform 2." evidence="2">
    <location>
        <begin position="299"/>
        <end position="567"/>
    </location>
</feature>
<feature type="sequence conflict" description="In Ref. 3; AAM91573." evidence="3" ref="3">
    <original>P</original>
    <variation>Q</variation>
    <location>
        <position position="157"/>
    </location>
</feature>
<dbReference type="EC" id="3.1.-.-"/>
<dbReference type="EMBL" id="AC005405">
    <property type="status" value="NOT_ANNOTATED_CDS"/>
    <property type="molecule type" value="Genomic_DNA"/>
</dbReference>
<dbReference type="EMBL" id="CP002688">
    <property type="protein sequence ID" value="AED93489.1"/>
    <property type="molecule type" value="Genomic_DNA"/>
</dbReference>
<dbReference type="EMBL" id="AY128370">
    <property type="protein sequence ID" value="AAM91573.1"/>
    <property type="molecule type" value="mRNA"/>
</dbReference>
<dbReference type="RefSeq" id="NP_197952.2">
    <molecule id="Q8L7M4-1"/>
    <property type="nucleotide sequence ID" value="NM_122481.3"/>
</dbReference>
<dbReference type="SMR" id="Q8L7M4"/>
<dbReference type="FunCoup" id="Q8L7M4">
    <property type="interactions" value="1651"/>
</dbReference>
<dbReference type="STRING" id="3702.Q8L7M4"/>
<dbReference type="PaxDb" id="3702-AT5G25800.1"/>
<dbReference type="EnsemblPlants" id="AT5G25800.1">
    <molecule id="Q8L7M4-1"/>
    <property type="protein sequence ID" value="AT5G25800.1"/>
    <property type="gene ID" value="AT5G25800"/>
</dbReference>
<dbReference type="GeneID" id="832649"/>
<dbReference type="Gramene" id="AT5G25800.1">
    <molecule id="Q8L7M4-1"/>
    <property type="protein sequence ID" value="AT5G25800.1"/>
    <property type="gene ID" value="AT5G25800"/>
</dbReference>
<dbReference type="KEGG" id="ath:AT5G25800"/>
<dbReference type="Araport" id="AT5G25800"/>
<dbReference type="TAIR" id="AT5G25800"/>
<dbReference type="eggNOG" id="KOG2248">
    <property type="taxonomic scope" value="Eukaryota"/>
</dbReference>
<dbReference type="HOGENOM" id="CLU_008679_3_0_1"/>
<dbReference type="InParanoid" id="Q8L7M4"/>
<dbReference type="OMA" id="WTQFSKL"/>
<dbReference type="PhylomeDB" id="Q8L7M4"/>
<dbReference type="PRO" id="PR:Q8L7M4"/>
<dbReference type="Proteomes" id="UP000006548">
    <property type="component" value="Chromosome 5"/>
</dbReference>
<dbReference type="ExpressionAtlas" id="Q8L7M4">
    <property type="expression patterns" value="baseline and differential"/>
</dbReference>
<dbReference type="GO" id="GO:0005634">
    <property type="term" value="C:nucleus"/>
    <property type="evidence" value="ECO:0007669"/>
    <property type="project" value="UniProtKB-SubCell"/>
</dbReference>
<dbReference type="GO" id="GO:0004527">
    <property type="term" value="F:exonuclease activity"/>
    <property type="evidence" value="ECO:0007669"/>
    <property type="project" value="UniProtKB-KW"/>
</dbReference>
<dbReference type="GO" id="GO:0003676">
    <property type="term" value="F:nucleic acid binding"/>
    <property type="evidence" value="ECO:0007669"/>
    <property type="project" value="InterPro"/>
</dbReference>
<dbReference type="CDD" id="cd06145">
    <property type="entry name" value="REX1_like"/>
    <property type="match status" value="1"/>
</dbReference>
<dbReference type="FunFam" id="3.30.420.10:FF:000019">
    <property type="entry name" value="RNA exonuclease NEF-sp"/>
    <property type="match status" value="1"/>
</dbReference>
<dbReference type="Gene3D" id="3.30.420.10">
    <property type="entry name" value="Ribonuclease H-like superfamily/Ribonuclease H"/>
    <property type="match status" value="1"/>
</dbReference>
<dbReference type="InterPro" id="IPR013520">
    <property type="entry name" value="Exonuclease_RNaseT/DNA_pol3"/>
</dbReference>
<dbReference type="InterPro" id="IPR034922">
    <property type="entry name" value="REX1-like_exo"/>
</dbReference>
<dbReference type="InterPro" id="IPR047021">
    <property type="entry name" value="REXO1/3/4-like"/>
</dbReference>
<dbReference type="InterPro" id="IPR012337">
    <property type="entry name" value="RNaseH-like_sf"/>
</dbReference>
<dbReference type="InterPro" id="IPR036397">
    <property type="entry name" value="RNaseH_sf"/>
</dbReference>
<dbReference type="PANTHER" id="PTHR12801">
    <property type="entry name" value="RNA EXONUCLEASE REXO1 / RECO3 FAMILY MEMBER-RELATED"/>
    <property type="match status" value="1"/>
</dbReference>
<dbReference type="PANTHER" id="PTHR12801:SF157">
    <property type="entry name" value="SMALL RNA DEGRADING NUCLEASE 5"/>
    <property type="match status" value="1"/>
</dbReference>
<dbReference type="Pfam" id="PF00929">
    <property type="entry name" value="RNase_T"/>
    <property type="match status" value="1"/>
</dbReference>
<dbReference type="SMART" id="SM00479">
    <property type="entry name" value="EXOIII"/>
    <property type="match status" value="1"/>
</dbReference>
<dbReference type="SUPFAM" id="SSF53098">
    <property type="entry name" value="Ribonuclease H-like"/>
    <property type="match status" value="1"/>
</dbReference>
<gene>
    <name type="primary">SDN5</name>
    <name type="ordered locus">At5g25800</name>
    <name type="ORF">F18A17.50</name>
</gene>
<name>SDN5_ARATH</name>